<sequence>MIKHSWIHLYVMASAMSSSPIFFFFQRWSLTLSLRLECSSAIIKPTAASNSCVQVNLPPSMCDYRHEPLCLAFL</sequence>
<organism>
    <name type="scientific">Homo sapiens</name>
    <name type="common">Human</name>
    <dbReference type="NCBI Taxonomy" id="9606"/>
    <lineage>
        <taxon>Eukaryota</taxon>
        <taxon>Metazoa</taxon>
        <taxon>Chordata</taxon>
        <taxon>Craniata</taxon>
        <taxon>Vertebrata</taxon>
        <taxon>Euteleostomi</taxon>
        <taxon>Mammalia</taxon>
        <taxon>Eutheria</taxon>
        <taxon>Euarchontoglires</taxon>
        <taxon>Primates</taxon>
        <taxon>Haplorrhini</taxon>
        <taxon>Catarrhini</taxon>
        <taxon>Hominidae</taxon>
        <taxon>Homo</taxon>
    </lineage>
</organism>
<dbReference type="EMBL" id="AF190748">
    <property type="protein sequence ID" value="AAL08583.1"/>
    <property type="molecule type" value="mRNA"/>
</dbReference>
<dbReference type="BioMuta" id="GAFA1"/>
<dbReference type="PeptideAtlas" id="Q96PS6"/>
<dbReference type="neXtProt" id="NX_Q96PS6"/>
<dbReference type="InParanoid" id="Q96PS6"/>
<dbReference type="PAN-GO" id="Q96PS6">
    <property type="GO annotations" value="0 GO annotations based on evolutionary models"/>
</dbReference>
<dbReference type="Pharos" id="Q96PS6">
    <property type="development level" value="Tdark"/>
</dbReference>
<dbReference type="Proteomes" id="UP000005640">
    <property type="component" value="Unplaced"/>
</dbReference>
<dbReference type="RNAct" id="Q96PS6">
    <property type="molecule type" value="protein"/>
</dbReference>
<dbReference type="GO" id="GO:0016020">
    <property type="term" value="C:membrane"/>
    <property type="evidence" value="ECO:0007669"/>
    <property type="project" value="UniProtKB-SubCell"/>
</dbReference>
<gene>
    <name type="primary">GAFA1</name>
</gene>
<comment type="subcellular location">
    <subcellularLocation>
        <location evidence="2">Membrane</location>
        <topology evidence="2">Single-pass membrane protein</topology>
    </subcellularLocation>
</comment>
<keyword id="KW-0472">Membrane</keyword>
<keyword id="KW-1185">Reference proteome</keyword>
<keyword id="KW-0812">Transmembrane</keyword>
<keyword id="KW-1133">Transmembrane helix</keyword>
<protein>
    <recommendedName>
        <fullName>Putative uncharacterized protein GAFA-1</fullName>
    </recommendedName>
    <alternativeName>
        <fullName>Gene associated with FGF-2 activity protein 1</fullName>
    </alternativeName>
</protein>
<reference key="1">
    <citation type="submission" date="1999-09" db="EMBL/GenBank/DDBJ databases">
        <title>The gene associated with FGF-2 activity (GAFA-1).</title>
        <authorList>
            <person name="Gan Y."/>
            <person name="Au J.L.S."/>
            <person name="Lu J."/>
            <person name="Wientjes M.G."/>
        </authorList>
    </citation>
    <scope>NUCLEOTIDE SEQUENCE [MRNA]</scope>
</reference>
<accession>Q96PS6</accession>
<feature type="chain" id="PRO_0000326068" description="Putative uncharacterized protein GAFA-1">
    <location>
        <begin position="1"/>
        <end position="74"/>
    </location>
</feature>
<feature type="transmembrane region" description="Helical" evidence="1">
    <location>
        <begin position="7"/>
        <end position="26"/>
    </location>
</feature>
<name>GAFA1_HUMAN</name>
<proteinExistence type="predicted"/>
<evidence type="ECO:0000255" key="1"/>
<evidence type="ECO:0000305" key="2"/>